<proteinExistence type="inferred from homology"/>
<comment type="function">
    <text evidence="1">Catalyzes the condensation reaction of fatty acid synthesis by the addition to an acyl acceptor of two carbons from malonyl-ACP. Catalyzes the first condensation reaction which initiates fatty acid synthesis and may therefore play a role in governing the total rate of fatty acid production. Possesses both acetoacetyl-ACP synthase and acetyl transacylase activities. Its substrate specificity determines the biosynthesis of branched-chain and/or straight-chain of fatty acids.</text>
</comment>
<comment type="catalytic activity">
    <reaction evidence="1">
        <text>malonyl-[ACP] + acetyl-CoA + H(+) = 3-oxobutanoyl-[ACP] + CO2 + CoA</text>
        <dbReference type="Rhea" id="RHEA:12080"/>
        <dbReference type="Rhea" id="RHEA-COMP:9623"/>
        <dbReference type="Rhea" id="RHEA-COMP:9625"/>
        <dbReference type="ChEBI" id="CHEBI:15378"/>
        <dbReference type="ChEBI" id="CHEBI:16526"/>
        <dbReference type="ChEBI" id="CHEBI:57287"/>
        <dbReference type="ChEBI" id="CHEBI:57288"/>
        <dbReference type="ChEBI" id="CHEBI:78449"/>
        <dbReference type="ChEBI" id="CHEBI:78450"/>
        <dbReference type="EC" id="2.3.1.180"/>
    </reaction>
</comment>
<comment type="pathway">
    <text evidence="1">Lipid metabolism; fatty acid biosynthesis.</text>
</comment>
<comment type="subunit">
    <text evidence="1">Homodimer.</text>
</comment>
<comment type="subcellular location">
    <subcellularLocation>
        <location evidence="1">Cytoplasm</location>
    </subcellularLocation>
</comment>
<comment type="domain">
    <text evidence="1">The last Arg residue of the ACP-binding site is essential for the weak association between ACP/AcpP and FabH.</text>
</comment>
<comment type="similarity">
    <text evidence="1">Belongs to the thiolase-like superfamily. FabH family.</text>
</comment>
<reference key="1">
    <citation type="journal article" date="2002" name="DNA Res.">
        <title>Complete genome structure of the thermophilic cyanobacterium Thermosynechococcus elongatus BP-1.</title>
        <authorList>
            <person name="Nakamura Y."/>
            <person name="Kaneko T."/>
            <person name="Sato S."/>
            <person name="Ikeuchi M."/>
            <person name="Katoh H."/>
            <person name="Sasamoto S."/>
            <person name="Watanabe A."/>
            <person name="Iriguchi M."/>
            <person name="Kawashima K."/>
            <person name="Kimura T."/>
            <person name="Kishida Y."/>
            <person name="Kiyokawa C."/>
            <person name="Kohara M."/>
            <person name="Matsumoto M."/>
            <person name="Matsuno A."/>
            <person name="Nakazaki N."/>
            <person name="Shimpo S."/>
            <person name="Sugimoto M."/>
            <person name="Takeuchi C."/>
            <person name="Yamada M."/>
            <person name="Tabata S."/>
        </authorList>
    </citation>
    <scope>NUCLEOTIDE SEQUENCE [LARGE SCALE GENOMIC DNA]</scope>
    <source>
        <strain>NIES-2133 / IAM M-273 / BP-1</strain>
    </source>
</reference>
<evidence type="ECO:0000255" key="1">
    <source>
        <dbReference type="HAMAP-Rule" id="MF_01815"/>
    </source>
</evidence>
<gene>
    <name evidence="1" type="primary">fabH</name>
    <name type="ordered locus">tlr0845</name>
</gene>
<dbReference type="EC" id="2.3.1.180" evidence="1"/>
<dbReference type="EMBL" id="BA000039">
    <property type="protein sequence ID" value="BAC08397.1"/>
    <property type="molecule type" value="Genomic_DNA"/>
</dbReference>
<dbReference type="RefSeq" id="NP_681635.1">
    <property type="nucleotide sequence ID" value="NC_004113.1"/>
</dbReference>
<dbReference type="RefSeq" id="WP_011056689.1">
    <property type="nucleotide sequence ID" value="NC_004113.1"/>
</dbReference>
<dbReference type="SMR" id="Q8DKL4"/>
<dbReference type="STRING" id="197221.gene:10747437"/>
<dbReference type="EnsemblBacteria" id="BAC08397">
    <property type="protein sequence ID" value="BAC08397"/>
    <property type="gene ID" value="BAC08397"/>
</dbReference>
<dbReference type="KEGG" id="tel:tlr0845"/>
<dbReference type="PATRIC" id="fig|197221.4.peg.890"/>
<dbReference type="eggNOG" id="COG0332">
    <property type="taxonomic scope" value="Bacteria"/>
</dbReference>
<dbReference type="UniPathway" id="UPA00094"/>
<dbReference type="Proteomes" id="UP000000440">
    <property type="component" value="Chromosome"/>
</dbReference>
<dbReference type="GO" id="GO:0005737">
    <property type="term" value="C:cytoplasm"/>
    <property type="evidence" value="ECO:0007669"/>
    <property type="project" value="UniProtKB-SubCell"/>
</dbReference>
<dbReference type="GO" id="GO:0004315">
    <property type="term" value="F:3-oxoacyl-[acyl-carrier-protein] synthase activity"/>
    <property type="evidence" value="ECO:0007669"/>
    <property type="project" value="InterPro"/>
</dbReference>
<dbReference type="GO" id="GO:0033818">
    <property type="term" value="F:beta-ketoacyl-acyl-carrier-protein synthase III activity"/>
    <property type="evidence" value="ECO:0007669"/>
    <property type="project" value="UniProtKB-UniRule"/>
</dbReference>
<dbReference type="GO" id="GO:0006633">
    <property type="term" value="P:fatty acid biosynthetic process"/>
    <property type="evidence" value="ECO:0007669"/>
    <property type="project" value="UniProtKB-UniRule"/>
</dbReference>
<dbReference type="CDD" id="cd00830">
    <property type="entry name" value="KAS_III"/>
    <property type="match status" value="1"/>
</dbReference>
<dbReference type="FunFam" id="3.40.47.10:FF:000004">
    <property type="entry name" value="3-oxoacyl-[acyl-carrier-protein] synthase 3"/>
    <property type="match status" value="1"/>
</dbReference>
<dbReference type="Gene3D" id="3.40.47.10">
    <property type="match status" value="1"/>
</dbReference>
<dbReference type="HAMAP" id="MF_01815">
    <property type="entry name" value="FabH"/>
    <property type="match status" value="1"/>
</dbReference>
<dbReference type="InterPro" id="IPR013747">
    <property type="entry name" value="ACP_syn_III_C"/>
</dbReference>
<dbReference type="InterPro" id="IPR013751">
    <property type="entry name" value="ACP_syn_III_N"/>
</dbReference>
<dbReference type="InterPro" id="IPR004655">
    <property type="entry name" value="FabH"/>
</dbReference>
<dbReference type="InterPro" id="IPR016039">
    <property type="entry name" value="Thiolase-like"/>
</dbReference>
<dbReference type="NCBIfam" id="TIGR00747">
    <property type="entry name" value="fabH"/>
    <property type="match status" value="1"/>
</dbReference>
<dbReference type="NCBIfam" id="NF006829">
    <property type="entry name" value="PRK09352.1"/>
    <property type="match status" value="1"/>
</dbReference>
<dbReference type="PANTHER" id="PTHR43091">
    <property type="entry name" value="3-OXOACYL-[ACYL-CARRIER-PROTEIN] SYNTHASE"/>
    <property type="match status" value="1"/>
</dbReference>
<dbReference type="PANTHER" id="PTHR43091:SF1">
    <property type="entry name" value="BETA-KETOACYL-[ACYL-CARRIER-PROTEIN] SYNTHASE III, CHLOROPLASTIC"/>
    <property type="match status" value="1"/>
</dbReference>
<dbReference type="Pfam" id="PF08545">
    <property type="entry name" value="ACP_syn_III"/>
    <property type="match status" value="1"/>
</dbReference>
<dbReference type="Pfam" id="PF08541">
    <property type="entry name" value="ACP_syn_III_C"/>
    <property type="match status" value="1"/>
</dbReference>
<dbReference type="SUPFAM" id="SSF53901">
    <property type="entry name" value="Thiolase-like"/>
    <property type="match status" value="1"/>
</dbReference>
<sequence length="329" mass="34806">MTVQGVKFSGVGAATPRQCLTNAHLSALVDTSDEWIQSRTGIQERHVAAPDQRLVDLASEAAGAALQMAGLDPTAVDLIILATSTPDDLFGTACLVQTRIGAVNAVAFDLTAACSGFLFALVTAAQYLRTGAYRSALVVGGDILSRWVDWGDRRTCILFGDGAGAMVLQASDVDQLLSFELRSDGRLNEHLTLAFAGTPQTLGENLAIAQGGFAPITMNGREVYRFAVTQVPEVIEKALHRAGCTVEEIDWLVLHQANQRILDAVAERLGIPQEKVISNVGQCGNTSAASIPLALSKPIQQGHIQPGDLIATAGFGAGLTWGAALFRWQ</sequence>
<keyword id="KW-0012">Acyltransferase</keyword>
<keyword id="KW-0963">Cytoplasm</keyword>
<keyword id="KW-0275">Fatty acid biosynthesis</keyword>
<keyword id="KW-0276">Fatty acid metabolism</keyword>
<keyword id="KW-0444">Lipid biosynthesis</keyword>
<keyword id="KW-0443">Lipid metabolism</keyword>
<keyword id="KW-0511">Multifunctional enzyme</keyword>
<keyword id="KW-1185">Reference proteome</keyword>
<keyword id="KW-0808">Transferase</keyword>
<name>FABH_THEVB</name>
<organism>
    <name type="scientific">Thermosynechococcus vestitus (strain NIES-2133 / IAM M-273 / BP-1)</name>
    <dbReference type="NCBI Taxonomy" id="197221"/>
    <lineage>
        <taxon>Bacteria</taxon>
        <taxon>Bacillati</taxon>
        <taxon>Cyanobacteriota</taxon>
        <taxon>Cyanophyceae</taxon>
        <taxon>Acaryochloridales</taxon>
        <taxon>Thermosynechococcaceae</taxon>
        <taxon>Thermosynechococcus</taxon>
    </lineage>
</organism>
<feature type="chain" id="PRO_0000110497" description="Beta-ketoacyl-[acyl-carrier-protein] synthase III">
    <location>
        <begin position="1"/>
        <end position="329"/>
    </location>
</feature>
<feature type="region of interest" description="ACP-binding" evidence="1">
    <location>
        <begin position="256"/>
        <end position="260"/>
    </location>
</feature>
<feature type="active site" evidence="1">
    <location>
        <position position="114"/>
    </location>
</feature>
<feature type="active site" evidence="1">
    <location>
        <position position="255"/>
    </location>
</feature>
<feature type="active site" evidence="1">
    <location>
        <position position="285"/>
    </location>
</feature>
<accession>Q8DKL4</accession>
<protein>
    <recommendedName>
        <fullName evidence="1">Beta-ketoacyl-[acyl-carrier-protein] synthase III</fullName>
        <shortName evidence="1">Beta-ketoacyl-ACP synthase III</shortName>
        <shortName evidence="1">KAS III</shortName>
        <ecNumber evidence="1">2.3.1.180</ecNumber>
    </recommendedName>
    <alternativeName>
        <fullName evidence="1">3-oxoacyl-[acyl-carrier-protein] synthase 3</fullName>
    </alternativeName>
    <alternativeName>
        <fullName evidence="1">3-oxoacyl-[acyl-carrier-protein] synthase III</fullName>
    </alternativeName>
</protein>